<gene>
    <name evidence="1" type="primary">rppH</name>
    <name evidence="1" type="synonym">nudH</name>
    <name type="ordered locus">HD_0172</name>
</gene>
<accession>Q7VPB7</accession>
<keyword id="KW-0378">Hydrolase</keyword>
<keyword id="KW-1185">Reference proteome</keyword>
<feature type="chain" id="PRO_0000057008" description="RNA pyrophosphohydrolase">
    <location>
        <begin position="1"/>
        <end position="197"/>
    </location>
</feature>
<feature type="domain" description="Nudix hydrolase" evidence="1">
    <location>
        <begin position="6"/>
        <end position="150"/>
    </location>
</feature>
<feature type="short sequence motif" description="Nudix box">
    <location>
        <begin position="38"/>
        <end position="59"/>
    </location>
</feature>
<proteinExistence type="inferred from homology"/>
<organism>
    <name type="scientific">Haemophilus ducreyi (strain 35000HP / ATCC 700724)</name>
    <dbReference type="NCBI Taxonomy" id="233412"/>
    <lineage>
        <taxon>Bacteria</taxon>
        <taxon>Pseudomonadati</taxon>
        <taxon>Pseudomonadota</taxon>
        <taxon>Gammaproteobacteria</taxon>
        <taxon>Pasteurellales</taxon>
        <taxon>Pasteurellaceae</taxon>
        <taxon>Haemophilus</taxon>
    </lineage>
</organism>
<comment type="function">
    <text evidence="1">Accelerates the degradation of transcripts by removing pyrophosphate from the 5'-end of triphosphorylated RNA, leading to a more labile monophosphorylated state that can stimulate subsequent ribonuclease cleavage.</text>
</comment>
<comment type="cofactor">
    <cofactor evidence="1">
        <name>a divalent metal cation</name>
        <dbReference type="ChEBI" id="CHEBI:60240"/>
    </cofactor>
</comment>
<comment type="similarity">
    <text evidence="1">Belongs to the Nudix hydrolase family. RppH subfamily.</text>
</comment>
<reference key="1">
    <citation type="submission" date="2003-06" db="EMBL/GenBank/DDBJ databases">
        <title>The complete genome sequence of Haemophilus ducreyi.</title>
        <authorList>
            <person name="Munson R.S. Jr."/>
            <person name="Ray W.C."/>
            <person name="Mahairas G."/>
            <person name="Sabo P."/>
            <person name="Mungur R."/>
            <person name="Johnson L."/>
            <person name="Nguyen D."/>
            <person name="Wang J."/>
            <person name="Forst C."/>
            <person name="Hood L."/>
        </authorList>
    </citation>
    <scope>NUCLEOTIDE SEQUENCE [LARGE SCALE GENOMIC DNA]</scope>
    <source>
        <strain>35000HP / ATCC 700724</strain>
    </source>
</reference>
<dbReference type="EC" id="3.6.1.-" evidence="1"/>
<dbReference type="EMBL" id="AE017143">
    <property type="protein sequence ID" value="AAP95165.1"/>
    <property type="molecule type" value="Genomic_DNA"/>
</dbReference>
<dbReference type="RefSeq" id="WP_010944219.1">
    <property type="nucleotide sequence ID" value="NC_002940.2"/>
</dbReference>
<dbReference type="SMR" id="Q7VPB7"/>
<dbReference type="STRING" id="233412.HD_0172"/>
<dbReference type="KEGG" id="hdu:HD_0172"/>
<dbReference type="eggNOG" id="COG0494">
    <property type="taxonomic scope" value="Bacteria"/>
</dbReference>
<dbReference type="HOGENOM" id="CLU_087195_3_2_6"/>
<dbReference type="OrthoDB" id="9816040at2"/>
<dbReference type="Proteomes" id="UP000001022">
    <property type="component" value="Chromosome"/>
</dbReference>
<dbReference type="GO" id="GO:0005737">
    <property type="term" value="C:cytoplasm"/>
    <property type="evidence" value="ECO:0007669"/>
    <property type="project" value="TreeGrafter"/>
</dbReference>
<dbReference type="GO" id="GO:0034353">
    <property type="term" value="F:mRNA 5'-diphosphatase activity"/>
    <property type="evidence" value="ECO:0007669"/>
    <property type="project" value="TreeGrafter"/>
</dbReference>
<dbReference type="GO" id="GO:0006402">
    <property type="term" value="P:mRNA catabolic process"/>
    <property type="evidence" value="ECO:0007669"/>
    <property type="project" value="TreeGrafter"/>
</dbReference>
<dbReference type="CDD" id="cd03671">
    <property type="entry name" value="NUDIX_Ap4A_hydrolase_plant_like"/>
    <property type="match status" value="1"/>
</dbReference>
<dbReference type="FunFam" id="3.90.79.10:FF:000001">
    <property type="entry name" value="RNA pyrophosphohydrolase"/>
    <property type="match status" value="1"/>
</dbReference>
<dbReference type="Gene3D" id="3.90.79.10">
    <property type="entry name" value="Nucleoside Triphosphate Pyrophosphohydrolase"/>
    <property type="match status" value="1"/>
</dbReference>
<dbReference type="HAMAP" id="MF_00298">
    <property type="entry name" value="Nudix_RppH"/>
    <property type="match status" value="1"/>
</dbReference>
<dbReference type="InterPro" id="IPR020476">
    <property type="entry name" value="Nudix_hydrolase"/>
</dbReference>
<dbReference type="InterPro" id="IPR015797">
    <property type="entry name" value="NUDIX_hydrolase-like_dom_sf"/>
</dbReference>
<dbReference type="InterPro" id="IPR020084">
    <property type="entry name" value="NUDIX_hydrolase_CS"/>
</dbReference>
<dbReference type="InterPro" id="IPR000086">
    <property type="entry name" value="NUDIX_hydrolase_dom"/>
</dbReference>
<dbReference type="InterPro" id="IPR022927">
    <property type="entry name" value="RppH"/>
</dbReference>
<dbReference type="NCBIfam" id="NF001934">
    <property type="entry name" value="PRK00714.1-1"/>
    <property type="match status" value="1"/>
</dbReference>
<dbReference type="NCBIfam" id="NF001937">
    <property type="entry name" value="PRK00714.1-4"/>
    <property type="match status" value="1"/>
</dbReference>
<dbReference type="NCBIfam" id="NF001938">
    <property type="entry name" value="PRK00714.1-5"/>
    <property type="match status" value="1"/>
</dbReference>
<dbReference type="PANTHER" id="PTHR23114">
    <property type="entry name" value="M7GPPPN-MRNA HYDROLASE"/>
    <property type="match status" value="1"/>
</dbReference>
<dbReference type="PANTHER" id="PTHR23114:SF17">
    <property type="entry name" value="M7GPPPN-MRNA HYDROLASE"/>
    <property type="match status" value="1"/>
</dbReference>
<dbReference type="Pfam" id="PF00293">
    <property type="entry name" value="NUDIX"/>
    <property type="match status" value="1"/>
</dbReference>
<dbReference type="PRINTS" id="PR00502">
    <property type="entry name" value="NUDIXFAMILY"/>
</dbReference>
<dbReference type="SUPFAM" id="SSF55811">
    <property type="entry name" value="Nudix"/>
    <property type="match status" value="1"/>
</dbReference>
<dbReference type="PROSITE" id="PS51462">
    <property type="entry name" value="NUDIX"/>
    <property type="match status" value="1"/>
</dbReference>
<dbReference type="PROSITE" id="PS00893">
    <property type="entry name" value="NUDIX_BOX"/>
    <property type="match status" value="1"/>
</dbReference>
<evidence type="ECO:0000255" key="1">
    <source>
        <dbReference type="HAMAP-Rule" id="MF_00298"/>
    </source>
</evidence>
<protein>
    <recommendedName>
        <fullName evidence="1">RNA pyrophosphohydrolase</fullName>
        <ecNumber evidence="1">3.6.1.-</ecNumber>
    </recommendedName>
    <alternativeName>
        <fullName evidence="1">(Di)nucleoside polyphosphate hydrolase</fullName>
    </alternativeName>
</protein>
<sequence>MIDFDGYRPNVGIVICNKVGQVLWARRFGQNSWQFPQGGINEGENIETAMYRELYEEVGLTKKDVRLLWASKYWLKYKLPKRLVRNDASQPVCIGQKQRWFLLQLVSDESAVNLKTTKSPEFDGWRWVSFWYPVRQVVSFKRDVYRKVMREFAAILLNETRKGETERSVLEASDKREYQRRETRKSARAWNHYPKGK</sequence>
<name>RPPH_HAEDU</name>